<organism>
    <name type="scientific">Helicobacter pylori (strain ATCC 700392 / 26695)</name>
    <name type="common">Campylobacter pylori</name>
    <dbReference type="NCBI Taxonomy" id="85962"/>
    <lineage>
        <taxon>Bacteria</taxon>
        <taxon>Pseudomonadati</taxon>
        <taxon>Campylobacterota</taxon>
        <taxon>Epsilonproteobacteria</taxon>
        <taxon>Campylobacterales</taxon>
        <taxon>Helicobacteraceae</taxon>
        <taxon>Helicobacter</taxon>
    </lineage>
</organism>
<protein>
    <recommendedName>
        <fullName evidence="1">Large ribosomal subunit protein uL14</fullName>
    </recommendedName>
    <alternativeName>
        <fullName evidence="2">50S ribosomal protein L14</fullName>
    </alternativeName>
</protein>
<gene>
    <name evidence="1" type="primary">rplN</name>
    <name type="ordered locus">HP_1309</name>
</gene>
<accession>P56039</accession>
<name>RL14_HELPY</name>
<feature type="chain" id="PRO_0000128544" description="Large ribosomal subunit protein uL14">
    <location>
        <begin position="1"/>
        <end position="122"/>
    </location>
</feature>
<proteinExistence type="evidence at protein level"/>
<sequence>MIQSFTRLNVADNSGAKEIMCIKVLGGSHKRYASVGSVIVASVKKAIPNGKVKRGQVVKAVVVRTKKEIQRKNGSLVRFDDNAAVILDAKKDPVGTRIFGPVSREVRYANFMKIISLAPEVV</sequence>
<reference key="1">
    <citation type="journal article" date="1997" name="Nature">
        <title>The complete genome sequence of the gastric pathogen Helicobacter pylori.</title>
        <authorList>
            <person name="Tomb J.-F."/>
            <person name="White O."/>
            <person name="Kerlavage A.R."/>
            <person name="Clayton R.A."/>
            <person name="Sutton G.G."/>
            <person name="Fleischmann R.D."/>
            <person name="Ketchum K.A."/>
            <person name="Klenk H.-P."/>
            <person name="Gill S.R."/>
            <person name="Dougherty B.A."/>
            <person name="Nelson K.E."/>
            <person name="Quackenbush J."/>
            <person name="Zhou L."/>
            <person name="Kirkness E.F."/>
            <person name="Peterson S.N."/>
            <person name="Loftus B.J."/>
            <person name="Richardson D.L."/>
            <person name="Dodson R.J."/>
            <person name="Khalak H.G."/>
            <person name="Glodek A."/>
            <person name="McKenney K."/>
            <person name="FitzGerald L.M."/>
            <person name="Lee N."/>
            <person name="Adams M.D."/>
            <person name="Hickey E.K."/>
            <person name="Berg D.E."/>
            <person name="Gocayne J.D."/>
            <person name="Utterback T.R."/>
            <person name="Peterson J.D."/>
            <person name="Kelley J.M."/>
            <person name="Cotton M.D."/>
            <person name="Weidman J.F."/>
            <person name="Fujii C."/>
            <person name="Bowman C."/>
            <person name="Watthey L."/>
            <person name="Wallin E."/>
            <person name="Hayes W.S."/>
            <person name="Borodovsky M."/>
            <person name="Karp P.D."/>
            <person name="Smith H.O."/>
            <person name="Fraser C.M."/>
            <person name="Venter J.C."/>
        </authorList>
    </citation>
    <scope>NUCLEOTIDE SEQUENCE [LARGE SCALE GENOMIC DNA]</scope>
    <source>
        <strain>ATCC 700392 / 26695</strain>
    </source>
</reference>
<comment type="function">
    <text evidence="1">Binds to 23S rRNA. Forms part of two intersubunit bridges in the 70S ribosome.</text>
</comment>
<comment type="subunit">
    <text evidence="1">Part of the 50S ribosomal subunit. Forms a cluster with proteins L3 and L19. In the 70S ribosome, L14 and L19 interact and together make contacts with the 16S rRNA in bridges B5 and B8.</text>
</comment>
<comment type="interaction">
    <interactant intactId="EBI-7497678">
        <id>P56039</id>
    </interactant>
    <interactant intactId="EBI-7497456">
        <id>Q48271</id>
        <label>copP</label>
    </interactant>
    <organismsDiffer>false</organismsDiffer>
    <experiments>3</experiments>
</comment>
<comment type="similarity">
    <text evidence="1">Belongs to the universal ribosomal protein uL14 family.</text>
</comment>
<keyword id="KW-1185">Reference proteome</keyword>
<keyword id="KW-0687">Ribonucleoprotein</keyword>
<keyword id="KW-0689">Ribosomal protein</keyword>
<keyword id="KW-0694">RNA-binding</keyword>
<keyword id="KW-0699">rRNA-binding</keyword>
<dbReference type="EMBL" id="AE000511">
    <property type="protein sequence ID" value="AAD08349.1"/>
    <property type="molecule type" value="Genomic_DNA"/>
</dbReference>
<dbReference type="PIR" id="E64683">
    <property type="entry name" value="E64683"/>
</dbReference>
<dbReference type="RefSeq" id="NP_208101.1">
    <property type="nucleotide sequence ID" value="NC_000915.1"/>
</dbReference>
<dbReference type="RefSeq" id="WP_000616110.1">
    <property type="nucleotide sequence ID" value="NC_018939.1"/>
</dbReference>
<dbReference type="SMR" id="P56039"/>
<dbReference type="DIP" id="DIP-3640N"/>
<dbReference type="FunCoup" id="P56039">
    <property type="interactions" value="412"/>
</dbReference>
<dbReference type="IntAct" id="P56039">
    <property type="interactions" value="1"/>
</dbReference>
<dbReference type="MINT" id="P56039"/>
<dbReference type="STRING" id="85962.HP_1309"/>
<dbReference type="PaxDb" id="85962-C694_06760"/>
<dbReference type="EnsemblBacteria" id="AAD08349">
    <property type="protein sequence ID" value="AAD08349"/>
    <property type="gene ID" value="HP_1309"/>
</dbReference>
<dbReference type="GeneID" id="31757675"/>
<dbReference type="KEGG" id="heo:C694_06760"/>
<dbReference type="KEGG" id="hpy:HP_1309"/>
<dbReference type="PATRIC" id="fig|85962.47.peg.1403"/>
<dbReference type="eggNOG" id="COG0093">
    <property type="taxonomic scope" value="Bacteria"/>
</dbReference>
<dbReference type="InParanoid" id="P56039"/>
<dbReference type="OrthoDB" id="9806379at2"/>
<dbReference type="PhylomeDB" id="P56039"/>
<dbReference type="Proteomes" id="UP000000429">
    <property type="component" value="Chromosome"/>
</dbReference>
<dbReference type="GO" id="GO:0022625">
    <property type="term" value="C:cytosolic large ribosomal subunit"/>
    <property type="evidence" value="ECO:0000318"/>
    <property type="project" value="GO_Central"/>
</dbReference>
<dbReference type="GO" id="GO:0070180">
    <property type="term" value="F:large ribosomal subunit rRNA binding"/>
    <property type="evidence" value="ECO:0000318"/>
    <property type="project" value="GO_Central"/>
</dbReference>
<dbReference type="GO" id="GO:0003735">
    <property type="term" value="F:structural constituent of ribosome"/>
    <property type="evidence" value="ECO:0000318"/>
    <property type="project" value="GO_Central"/>
</dbReference>
<dbReference type="GO" id="GO:0006412">
    <property type="term" value="P:translation"/>
    <property type="evidence" value="ECO:0007669"/>
    <property type="project" value="UniProtKB-UniRule"/>
</dbReference>
<dbReference type="CDD" id="cd00337">
    <property type="entry name" value="Ribosomal_uL14"/>
    <property type="match status" value="1"/>
</dbReference>
<dbReference type="FunFam" id="2.40.150.20:FF:000001">
    <property type="entry name" value="50S ribosomal protein L14"/>
    <property type="match status" value="1"/>
</dbReference>
<dbReference type="Gene3D" id="2.40.150.20">
    <property type="entry name" value="Ribosomal protein L14"/>
    <property type="match status" value="1"/>
</dbReference>
<dbReference type="HAMAP" id="MF_01367">
    <property type="entry name" value="Ribosomal_uL14"/>
    <property type="match status" value="1"/>
</dbReference>
<dbReference type="InterPro" id="IPR000218">
    <property type="entry name" value="Ribosomal_uL14"/>
</dbReference>
<dbReference type="InterPro" id="IPR005745">
    <property type="entry name" value="Ribosomal_uL14_bac-type"/>
</dbReference>
<dbReference type="InterPro" id="IPR019972">
    <property type="entry name" value="Ribosomal_uL14_CS"/>
</dbReference>
<dbReference type="InterPro" id="IPR036853">
    <property type="entry name" value="Ribosomal_uL14_sf"/>
</dbReference>
<dbReference type="NCBIfam" id="TIGR01067">
    <property type="entry name" value="rplN_bact"/>
    <property type="match status" value="1"/>
</dbReference>
<dbReference type="PANTHER" id="PTHR11761">
    <property type="entry name" value="50S/60S RIBOSOMAL PROTEIN L14/L23"/>
    <property type="match status" value="1"/>
</dbReference>
<dbReference type="PANTHER" id="PTHR11761:SF3">
    <property type="entry name" value="LARGE RIBOSOMAL SUBUNIT PROTEIN UL14M"/>
    <property type="match status" value="1"/>
</dbReference>
<dbReference type="Pfam" id="PF00238">
    <property type="entry name" value="Ribosomal_L14"/>
    <property type="match status" value="1"/>
</dbReference>
<dbReference type="SMART" id="SM01374">
    <property type="entry name" value="Ribosomal_L14"/>
    <property type="match status" value="1"/>
</dbReference>
<dbReference type="SUPFAM" id="SSF50193">
    <property type="entry name" value="Ribosomal protein L14"/>
    <property type="match status" value="1"/>
</dbReference>
<dbReference type="PROSITE" id="PS00049">
    <property type="entry name" value="RIBOSOMAL_L14"/>
    <property type="match status" value="1"/>
</dbReference>
<evidence type="ECO:0000255" key="1">
    <source>
        <dbReference type="HAMAP-Rule" id="MF_01367"/>
    </source>
</evidence>
<evidence type="ECO:0000305" key="2"/>